<reference key="1">
    <citation type="submission" date="2007-03" db="EMBL/GenBank/DDBJ databases">
        <title>Complete sequence of Desulfotomaculum reducens MI-1.</title>
        <authorList>
            <consortium name="US DOE Joint Genome Institute"/>
            <person name="Copeland A."/>
            <person name="Lucas S."/>
            <person name="Lapidus A."/>
            <person name="Barry K."/>
            <person name="Detter J.C."/>
            <person name="Glavina del Rio T."/>
            <person name="Hammon N."/>
            <person name="Israni S."/>
            <person name="Dalin E."/>
            <person name="Tice H."/>
            <person name="Pitluck S."/>
            <person name="Sims D."/>
            <person name="Brettin T."/>
            <person name="Bruce D."/>
            <person name="Han C."/>
            <person name="Tapia R."/>
            <person name="Schmutz J."/>
            <person name="Larimer F."/>
            <person name="Land M."/>
            <person name="Hauser L."/>
            <person name="Kyrpides N."/>
            <person name="Kim E."/>
            <person name="Tebo B.M."/>
            <person name="Richardson P."/>
        </authorList>
    </citation>
    <scope>NUCLEOTIDE SEQUENCE [LARGE SCALE GENOMIC DNA]</scope>
    <source>
        <strain>ATCC BAA-1160 / DSM 100696 / MI-1</strain>
    </source>
</reference>
<comment type="function">
    <text evidence="1">Specifically methylates the N7 position of a guanine in 16S rRNA.</text>
</comment>
<comment type="subcellular location">
    <subcellularLocation>
        <location evidence="1">Cytoplasm</location>
    </subcellularLocation>
</comment>
<comment type="similarity">
    <text evidence="1">Belongs to the methyltransferase superfamily. RNA methyltransferase RsmG family.</text>
</comment>
<name>RSMG_DESRM</name>
<keyword id="KW-0963">Cytoplasm</keyword>
<keyword id="KW-0489">Methyltransferase</keyword>
<keyword id="KW-1185">Reference proteome</keyword>
<keyword id="KW-0698">rRNA processing</keyword>
<keyword id="KW-0949">S-adenosyl-L-methionine</keyword>
<keyword id="KW-0808">Transferase</keyword>
<proteinExistence type="inferred from homology"/>
<feature type="chain" id="PRO_0000335347" description="Ribosomal RNA small subunit methyltransferase G">
    <location>
        <begin position="1"/>
        <end position="240"/>
    </location>
</feature>
<feature type="binding site" evidence="1">
    <location>
        <position position="79"/>
    </location>
    <ligand>
        <name>S-adenosyl-L-methionine</name>
        <dbReference type="ChEBI" id="CHEBI:59789"/>
    </ligand>
</feature>
<feature type="binding site" evidence="1">
    <location>
        <position position="84"/>
    </location>
    <ligand>
        <name>S-adenosyl-L-methionine</name>
        <dbReference type="ChEBI" id="CHEBI:59789"/>
    </ligand>
</feature>
<feature type="binding site" evidence="1">
    <location>
        <begin position="130"/>
        <end position="131"/>
    </location>
    <ligand>
        <name>S-adenosyl-L-methionine</name>
        <dbReference type="ChEBI" id="CHEBI:59789"/>
    </ligand>
</feature>
<feature type="binding site" evidence="1">
    <location>
        <position position="149"/>
    </location>
    <ligand>
        <name>S-adenosyl-L-methionine</name>
        <dbReference type="ChEBI" id="CHEBI:59789"/>
    </ligand>
</feature>
<sequence length="240" mass="27024">MNDLTITLKQAAKEMEFDLTENQTLAFEKYYNLLIEWNKNINLTAIIEPKEVALKHFIDSLTCLKILEIPCQANVLDIGTGAGFPGIPIKIFRPDINVTLMDSLNKRVNFLNEVIKKLGLTNICAIHDRAEDFGQKKEHREKYDYVLSRAVAKLKVLSEYCLPCTKLDGYFISQKGPDIDEEVKEASKAIEVLGGSLLNIHKLQLPFINDGRSLVVIKKVKQTPSVYPRKAGIPAKKPIA</sequence>
<dbReference type="EC" id="2.1.1.-" evidence="1"/>
<dbReference type="EMBL" id="CP000612">
    <property type="protein sequence ID" value="ABO51822.1"/>
    <property type="molecule type" value="Genomic_DNA"/>
</dbReference>
<dbReference type="RefSeq" id="WP_011879607.1">
    <property type="nucleotide sequence ID" value="NC_009253.1"/>
</dbReference>
<dbReference type="SMR" id="A4J9R9"/>
<dbReference type="STRING" id="349161.Dred_3322"/>
<dbReference type="KEGG" id="drm:Dred_3322"/>
<dbReference type="eggNOG" id="COG0357">
    <property type="taxonomic scope" value="Bacteria"/>
</dbReference>
<dbReference type="HOGENOM" id="CLU_065341_0_0_9"/>
<dbReference type="OrthoDB" id="9808773at2"/>
<dbReference type="Proteomes" id="UP000001556">
    <property type="component" value="Chromosome"/>
</dbReference>
<dbReference type="GO" id="GO:0005829">
    <property type="term" value="C:cytosol"/>
    <property type="evidence" value="ECO:0007669"/>
    <property type="project" value="TreeGrafter"/>
</dbReference>
<dbReference type="GO" id="GO:0070043">
    <property type="term" value="F:rRNA (guanine-N7-)-methyltransferase activity"/>
    <property type="evidence" value="ECO:0007669"/>
    <property type="project" value="UniProtKB-UniRule"/>
</dbReference>
<dbReference type="CDD" id="cd02440">
    <property type="entry name" value="AdoMet_MTases"/>
    <property type="match status" value="1"/>
</dbReference>
<dbReference type="FunFam" id="3.40.50.150:FF:000041">
    <property type="entry name" value="Ribosomal RNA small subunit methyltransferase G"/>
    <property type="match status" value="1"/>
</dbReference>
<dbReference type="Gene3D" id="3.40.50.150">
    <property type="entry name" value="Vaccinia Virus protein VP39"/>
    <property type="match status" value="1"/>
</dbReference>
<dbReference type="HAMAP" id="MF_00074">
    <property type="entry name" value="16SrRNA_methyltr_G"/>
    <property type="match status" value="1"/>
</dbReference>
<dbReference type="InterPro" id="IPR003682">
    <property type="entry name" value="rRNA_ssu_MeTfrase_G"/>
</dbReference>
<dbReference type="InterPro" id="IPR029063">
    <property type="entry name" value="SAM-dependent_MTases_sf"/>
</dbReference>
<dbReference type="NCBIfam" id="TIGR00138">
    <property type="entry name" value="rsmG_gidB"/>
    <property type="match status" value="1"/>
</dbReference>
<dbReference type="PANTHER" id="PTHR31760">
    <property type="entry name" value="S-ADENOSYL-L-METHIONINE-DEPENDENT METHYLTRANSFERASES SUPERFAMILY PROTEIN"/>
    <property type="match status" value="1"/>
</dbReference>
<dbReference type="PANTHER" id="PTHR31760:SF0">
    <property type="entry name" value="S-ADENOSYL-L-METHIONINE-DEPENDENT METHYLTRANSFERASES SUPERFAMILY PROTEIN"/>
    <property type="match status" value="1"/>
</dbReference>
<dbReference type="Pfam" id="PF02527">
    <property type="entry name" value="GidB"/>
    <property type="match status" value="1"/>
</dbReference>
<dbReference type="PIRSF" id="PIRSF003078">
    <property type="entry name" value="GidB"/>
    <property type="match status" value="1"/>
</dbReference>
<dbReference type="SUPFAM" id="SSF53335">
    <property type="entry name" value="S-adenosyl-L-methionine-dependent methyltransferases"/>
    <property type="match status" value="1"/>
</dbReference>
<organism>
    <name type="scientific">Desulforamulus reducens (strain ATCC BAA-1160 / DSM 100696 / MI-1)</name>
    <name type="common">Desulfotomaculum reducens</name>
    <dbReference type="NCBI Taxonomy" id="349161"/>
    <lineage>
        <taxon>Bacteria</taxon>
        <taxon>Bacillati</taxon>
        <taxon>Bacillota</taxon>
        <taxon>Clostridia</taxon>
        <taxon>Eubacteriales</taxon>
        <taxon>Peptococcaceae</taxon>
        <taxon>Desulforamulus</taxon>
    </lineage>
</organism>
<evidence type="ECO:0000255" key="1">
    <source>
        <dbReference type="HAMAP-Rule" id="MF_00074"/>
    </source>
</evidence>
<protein>
    <recommendedName>
        <fullName evidence="1">Ribosomal RNA small subunit methyltransferase G</fullName>
        <ecNumber evidence="1">2.1.1.-</ecNumber>
    </recommendedName>
    <alternativeName>
        <fullName evidence="1">16S rRNA 7-methylguanosine methyltransferase</fullName>
        <shortName evidence="1">16S rRNA m7G methyltransferase</shortName>
    </alternativeName>
</protein>
<gene>
    <name evidence="1" type="primary">rsmG</name>
    <name type="ordered locus">Dred_3322</name>
</gene>
<accession>A4J9R9</accession>